<evidence type="ECO:0000250" key="1">
    <source>
        <dbReference type="UniProtKB" id="Q0KBC8"/>
    </source>
</evidence>
<evidence type="ECO:0000250" key="2">
    <source>
        <dbReference type="UniProtKB" id="Q6D0N7"/>
    </source>
</evidence>
<evidence type="ECO:0000269" key="3">
    <source>
    </source>
</evidence>
<evidence type="ECO:0000269" key="4">
    <source>
    </source>
</evidence>
<evidence type="ECO:0000303" key="5">
    <source>
    </source>
</evidence>
<evidence type="ECO:0000305" key="6"/>
<evidence type="ECO:0000312" key="7">
    <source>
        <dbReference type="EMBL" id="AAL19126.1"/>
    </source>
</evidence>
<name>DTNK_SALTY</name>
<dbReference type="EC" id="2.7.1.219" evidence="4"/>
<dbReference type="EMBL" id="AE006468">
    <property type="protein sequence ID" value="AAL19126.1"/>
    <property type="molecule type" value="Genomic_DNA"/>
</dbReference>
<dbReference type="RefSeq" id="NP_459167.1">
    <property type="nucleotide sequence ID" value="NC_003197.2"/>
</dbReference>
<dbReference type="RefSeq" id="WP_000782192.1">
    <property type="nucleotide sequence ID" value="NC_003197.2"/>
</dbReference>
<dbReference type="SMR" id="Q8ZRS5"/>
<dbReference type="STRING" id="99287.STM0162"/>
<dbReference type="PaxDb" id="99287-STM0162"/>
<dbReference type="GeneID" id="1251680"/>
<dbReference type="KEGG" id="stm:STM0162"/>
<dbReference type="PATRIC" id="fig|99287.12.peg.172"/>
<dbReference type="HOGENOM" id="CLU_029424_0_1_6"/>
<dbReference type="OMA" id="IASCVPW"/>
<dbReference type="PhylomeDB" id="Q8ZRS5"/>
<dbReference type="BioCyc" id="MetaCyc:STM0162-MONOMER"/>
<dbReference type="BioCyc" id="SENT99287:STM0162-MONOMER"/>
<dbReference type="BRENDA" id="2.7.1.219">
    <property type="organism ID" value="5542"/>
</dbReference>
<dbReference type="Proteomes" id="UP000001014">
    <property type="component" value="Chromosome"/>
</dbReference>
<dbReference type="GO" id="GO:0005524">
    <property type="term" value="F:ATP binding"/>
    <property type="evidence" value="ECO:0007669"/>
    <property type="project" value="UniProtKB-KW"/>
</dbReference>
<dbReference type="GO" id="GO:0016301">
    <property type="term" value="F:kinase activity"/>
    <property type="evidence" value="ECO:0007669"/>
    <property type="project" value="UniProtKB-KW"/>
</dbReference>
<dbReference type="Gene3D" id="3.40.980.20">
    <property type="entry name" value="Four-carbon acid sugar kinase, nucleotide binding domain"/>
    <property type="match status" value="1"/>
</dbReference>
<dbReference type="Gene3D" id="3.40.50.10840">
    <property type="entry name" value="Putative sugar-binding, N-terminal domain"/>
    <property type="match status" value="1"/>
</dbReference>
<dbReference type="InterPro" id="IPR010737">
    <property type="entry name" value="4-carb_acid_sugar_kinase_N"/>
</dbReference>
<dbReference type="InterPro" id="IPR037051">
    <property type="entry name" value="4-carb_acid_sugar_kinase_N_sf"/>
</dbReference>
<dbReference type="InterPro" id="IPR031475">
    <property type="entry name" value="NBD_C"/>
</dbReference>
<dbReference type="InterPro" id="IPR042213">
    <property type="entry name" value="NBD_C_sf"/>
</dbReference>
<dbReference type="NCBIfam" id="NF047819">
    <property type="entry name" value="ThrnKinDtnkGamma"/>
    <property type="match status" value="1"/>
</dbReference>
<dbReference type="Pfam" id="PF17042">
    <property type="entry name" value="NBD_C"/>
    <property type="match status" value="1"/>
</dbReference>
<dbReference type="Pfam" id="PF07005">
    <property type="entry name" value="SBD_N"/>
    <property type="match status" value="1"/>
</dbReference>
<dbReference type="SUPFAM" id="SSF142764">
    <property type="entry name" value="YgbK-like"/>
    <property type="match status" value="1"/>
</dbReference>
<protein>
    <recommendedName>
        <fullName evidence="5">D-threonate kinase</fullName>
        <ecNumber evidence="4">2.7.1.219</ecNumber>
    </recommendedName>
</protein>
<feature type="chain" id="PRO_0000439677" description="D-threonate kinase">
    <location>
        <begin position="1"/>
        <end position="423"/>
    </location>
</feature>
<feature type="binding site" evidence="2">
    <location>
        <position position="9"/>
    </location>
    <ligand>
        <name>substrate</name>
    </ligand>
</feature>
<feature type="binding site" evidence="2">
    <location>
        <position position="51"/>
    </location>
    <ligand>
        <name>substrate</name>
    </ligand>
</feature>
<feature type="binding site" evidence="2">
    <location>
        <begin position="81"/>
        <end position="84"/>
    </location>
    <ligand>
        <name>substrate</name>
    </ligand>
</feature>
<feature type="binding site" evidence="1">
    <location>
        <position position="245"/>
    </location>
    <ligand>
        <name>ATP</name>
        <dbReference type="ChEBI" id="CHEBI:30616"/>
    </ligand>
</feature>
<feature type="binding site" evidence="1">
    <location>
        <begin position="355"/>
        <end position="358"/>
    </location>
    <ligand>
        <name>ATP</name>
        <dbReference type="ChEBI" id="CHEBI:30616"/>
    </ligand>
</feature>
<feature type="binding site" evidence="1">
    <location>
        <position position="401"/>
    </location>
    <ligand>
        <name>ATP</name>
        <dbReference type="ChEBI" id="CHEBI:30616"/>
    </ligand>
</feature>
<feature type="mutagenesis site" description="Lack of activity." evidence="3">
    <original>G</original>
    <variation>A</variation>
    <location>
        <position position="401"/>
    </location>
</feature>
<sequence>MKMIVIADDFTGSNDTGVQLAKKGARTEVMLSASQKPSRRADVLVINTESRAMPADQAASAVYAALSPWCETSPAPLVYKKIDSTFRGNIGAEVTAAMRASQRKLAVIAAAIPAAGRTTLEGKCLVNGVPLLETEFASDPKTPIVSSRIAEIVALQSEIPVYEVFLQDVRRGGLSALLTAYAAEGEGIIVVDAVEERDLTLIAQAACEQPSMPLLVGAAGLANALPVELFMQDRQRLPVLVVAGSMSEATRRQVDNALCRGRAEVVDIDAARMVSDSAEQEIASVVEQACALLSQHRHTILRTSRRAEDRQLIDALCEKSAMSRQQLGERLSQRLGVVTLNIIEQARIGGLFLTGGDIATAVAGALGAEGYRIQSEVAPCIPCGTFVNSEIDDLPVITKAGGFGSDSTLCDALYYIEEMYCGD</sequence>
<gene>
    <name evidence="5" type="primary">dtnK</name>
    <name evidence="7" type="ordered locus">STM0162</name>
</gene>
<accession>Q8ZRS5</accession>
<organism>
    <name type="scientific">Salmonella typhimurium (strain LT2 / SGSC1412 / ATCC 700720)</name>
    <dbReference type="NCBI Taxonomy" id="99287"/>
    <lineage>
        <taxon>Bacteria</taxon>
        <taxon>Pseudomonadati</taxon>
        <taxon>Pseudomonadota</taxon>
        <taxon>Gammaproteobacteria</taxon>
        <taxon>Enterobacterales</taxon>
        <taxon>Enterobacteriaceae</taxon>
        <taxon>Salmonella</taxon>
    </lineage>
</organism>
<keyword id="KW-0067">ATP-binding</keyword>
<keyword id="KW-0119">Carbohydrate metabolism</keyword>
<keyword id="KW-0418">Kinase</keyword>
<keyword id="KW-0547">Nucleotide-binding</keyword>
<keyword id="KW-1185">Reference proteome</keyword>
<keyword id="KW-0808">Transferase</keyword>
<reference key="1">
    <citation type="journal article" date="2001" name="Nature">
        <title>Complete genome sequence of Salmonella enterica serovar Typhimurium LT2.</title>
        <authorList>
            <person name="McClelland M."/>
            <person name="Sanderson K.E."/>
            <person name="Spieth J."/>
            <person name="Clifton S.W."/>
            <person name="Latreille P."/>
            <person name="Courtney L."/>
            <person name="Porwollik S."/>
            <person name="Ali J."/>
            <person name="Dante M."/>
            <person name="Du F."/>
            <person name="Hou S."/>
            <person name="Layman D."/>
            <person name="Leonard S."/>
            <person name="Nguyen C."/>
            <person name="Scott K."/>
            <person name="Holmes A."/>
            <person name="Grewal N."/>
            <person name="Mulvaney E."/>
            <person name="Ryan E."/>
            <person name="Sun H."/>
            <person name="Florea L."/>
            <person name="Miller W."/>
            <person name="Stoneking T."/>
            <person name="Nhan M."/>
            <person name="Waterston R."/>
            <person name="Wilson R.K."/>
        </authorList>
    </citation>
    <scope>NUCLEOTIDE SEQUENCE [LARGE SCALE GENOMIC DNA]</scope>
    <source>
        <strain>LT2 / SGSC1412 / ATCC 700720</strain>
    </source>
</reference>
<reference key="2">
    <citation type="journal article" date="2016" name="ACS Chem. Biol.">
        <title>Members of a novel kinase family (DUF1537) can recycle toxic intermediates into an essential metabolite.</title>
        <authorList>
            <person name="Thiaville J.J."/>
            <person name="Flood J."/>
            <person name="Yurgel S."/>
            <person name="Prunetti L."/>
            <person name="Elbadawi-Sidhu M."/>
            <person name="Hutinet G."/>
            <person name="Forouhar F."/>
            <person name="Zhang X."/>
            <person name="Ganesan V."/>
            <person name="Reddy P."/>
            <person name="Fiehn O."/>
            <person name="Gerlt J.A."/>
            <person name="Hunt J.F."/>
            <person name="Copley S.D."/>
            <person name="de Crecy-Lagard V."/>
        </authorList>
    </citation>
    <scope>FUNCTION</scope>
    <scope>BIOPHYSICOCHEMICAL PROPERTIES</scope>
    <scope>MUTAGENESIS OF GLY-401</scope>
</reference>
<reference key="3">
    <citation type="journal article" date="2016" name="Proc. Natl. Acad. Sci. U.S.A.">
        <title>Assignment of function to a domain of unknown function: DUF1537 is a new kinase family in catabolic pathways for acid sugars.</title>
        <authorList>
            <person name="Zhang X."/>
            <person name="Carter M.S."/>
            <person name="Vetting M.W."/>
            <person name="San Francisco B."/>
            <person name="Zhao S."/>
            <person name="Al-Obaidi N.F."/>
            <person name="Solbiati J.O."/>
            <person name="Thiaville J.J."/>
            <person name="de Crecy-Lagard V."/>
            <person name="Jacobson M.P."/>
            <person name="Almo S.C."/>
            <person name="Gerlt J.A."/>
        </authorList>
    </citation>
    <scope>FUNCTION</scope>
    <scope>CATALYTIC ACTIVITY</scope>
    <scope>BIOPHYSICOCHEMICAL PROPERTIES</scope>
    <scope>DISRUPTION PHENOTYPE</scope>
    <source>
        <strain>LT2 / SGSC1412 / ATCC 700720</strain>
    </source>
</reference>
<comment type="function">
    <text evidence="3 4">Catalyzes the ATP-dependent phosphorylation of D-threonate to D-threonate 4-phosphate (PubMed:27402745). Can also phosphorylate 4-hydroxy-L-threonine, with lower efficiency. This side reaction may serve to deal with the toxicity of 4-hydroxy-L-threonine by converting it into 4-hydroxy-L-threonine 4-phosphate, a useful product that can be used by PdxA2 (PubMed:27294475, PubMed:27402745).</text>
</comment>
<comment type="catalytic activity">
    <reaction evidence="4">
        <text>D-threonate + ATP = 4-O-phospho-D-threonate + ADP + H(+)</text>
        <dbReference type="Rhea" id="RHEA:52388"/>
        <dbReference type="ChEBI" id="CHEBI:15378"/>
        <dbReference type="ChEBI" id="CHEBI:30616"/>
        <dbReference type="ChEBI" id="CHEBI:45912"/>
        <dbReference type="ChEBI" id="CHEBI:136590"/>
        <dbReference type="ChEBI" id="CHEBI:456216"/>
        <dbReference type="EC" id="2.7.1.219"/>
    </reaction>
</comment>
<comment type="biophysicochemical properties">
    <kinetics>
        <KM evidence="3 4">0.29 mM for D-threonate</KM>
        <KM evidence="3 4">3.8 mM for 4-hydroxy-L-threonine</KM>
        <text evidence="3 4">kcat is 22 sec(-1) with D-threonate as substrate. kcat is 4.0 sec(-1) with 4-hydroxy-L-threonine as substrate.</text>
    </kinetics>
</comment>
<comment type="disruption phenotype">
    <text evidence="4">Deletion mutant is unable to use D-threonate as a carbon source.</text>
</comment>
<comment type="similarity">
    <text evidence="6">Belongs to the four-carbon acid sugar kinase family.</text>
</comment>
<proteinExistence type="evidence at protein level"/>